<keyword id="KW-1222">Bradykinin receptor impairing toxin</keyword>
<keyword id="KW-0903">Direct protein sequencing</keyword>
<keyword id="KW-1213">G-protein coupled receptor impairing toxin</keyword>
<keyword id="KW-0382">Hypotensive agent</keyword>
<keyword id="KW-0964">Secreted</keyword>
<keyword id="KW-0800">Toxin</keyword>
<keyword id="KW-0838">Vasoactive</keyword>
<keyword id="KW-0840">Vasodilator</keyword>
<feature type="peptide" id="PRO_0000371796" description="Wasp kinin PMM1" evidence="2">
    <location>
        <begin position="1"/>
        <end position="11"/>
    </location>
</feature>
<name>BRK_POLMJ</name>
<evidence type="ECO:0000250" key="1"/>
<evidence type="ECO:0000269" key="2">
    <source>
    </source>
</evidence>
<evidence type="ECO:0000303" key="3">
    <source>
    </source>
</evidence>
<evidence type="ECO:0000305" key="4"/>
<evidence type="ECO:0000305" key="5">
    <source>
    </source>
</evidence>
<comment type="function">
    <text evidence="1">Induces relaxation of arterial smooth muscle, by targeting bradykinin receptors (BDKRB) (By similarity). May cause hypotension.</text>
</comment>
<comment type="subcellular location">
    <subcellularLocation>
        <location evidence="2">Secreted</location>
    </subcellularLocation>
</comment>
<comment type="tissue specificity">
    <text evidence="5">Expressed by the venom gland.</text>
</comment>
<comment type="mass spectrometry" mass="1359.3" method="MALDI" evidence="2"/>
<comment type="similarity">
    <text evidence="4">Belongs to the bradykinin-related peptide family.</text>
</comment>
<proteinExistence type="evidence at protein level"/>
<organism>
    <name type="scientific">Polistes major</name>
    <name type="common">Horse paper wasp</name>
    <dbReference type="NCBI Taxonomy" id="91420"/>
    <lineage>
        <taxon>Eukaryota</taxon>
        <taxon>Metazoa</taxon>
        <taxon>Ecdysozoa</taxon>
        <taxon>Arthropoda</taxon>
        <taxon>Hexapoda</taxon>
        <taxon>Insecta</taxon>
        <taxon>Pterygota</taxon>
        <taxon>Neoptera</taxon>
        <taxon>Endopterygota</taxon>
        <taxon>Hymenoptera</taxon>
        <taxon>Apocrita</taxon>
        <taxon>Aculeata</taxon>
        <taxon>Vespoidea</taxon>
        <taxon>Vespidae</taxon>
        <taxon>Polistinae</taxon>
        <taxon>Polistini</taxon>
        <taxon>Polistes</taxon>
    </lineage>
</organism>
<reference key="1">
    <citation type="journal article" date="2007" name="J. Pept. Sci.">
        <title>Identification of three novel peptides isolated from the venom of the neotropical social wasp Polistes major major.</title>
        <authorList>
            <person name="Cerovsky V."/>
            <person name="Pohl J."/>
            <person name="Yang Z."/>
            <person name="Alam N."/>
            <person name="Attygalle A.B."/>
        </authorList>
    </citation>
    <scope>PROTEIN SEQUENCE</scope>
    <scope>SUBCELLULAR LOCATION</scope>
    <scope>MASS SPECTROMETRY</scope>
    <source>
        <strain>Subsp. major</strain>
        <tissue>Venom</tissue>
    </source>
</reference>
<dbReference type="GO" id="GO:0005576">
    <property type="term" value="C:extracellular region"/>
    <property type="evidence" value="ECO:0000314"/>
    <property type="project" value="UniProtKB"/>
</dbReference>
<dbReference type="GO" id="GO:0005179">
    <property type="term" value="F:hormone activity"/>
    <property type="evidence" value="ECO:0007669"/>
    <property type="project" value="InterPro"/>
</dbReference>
<dbReference type="GO" id="GO:0090729">
    <property type="term" value="F:toxin activity"/>
    <property type="evidence" value="ECO:0007669"/>
    <property type="project" value="UniProtKB-KW"/>
</dbReference>
<dbReference type="GO" id="GO:0006952">
    <property type="term" value="P:defense response"/>
    <property type="evidence" value="ECO:0007669"/>
    <property type="project" value="InterPro"/>
</dbReference>
<dbReference type="GO" id="GO:0008217">
    <property type="term" value="P:regulation of blood pressure"/>
    <property type="evidence" value="ECO:0007669"/>
    <property type="project" value="UniProtKB-KW"/>
</dbReference>
<dbReference type="GO" id="GO:0042311">
    <property type="term" value="P:vasodilation"/>
    <property type="evidence" value="ECO:0007669"/>
    <property type="project" value="UniProtKB-KW"/>
</dbReference>
<dbReference type="InterPro" id="IPR009608">
    <property type="entry name" value="Bradykinin"/>
</dbReference>
<dbReference type="Pfam" id="PF06753">
    <property type="entry name" value="Bradykinin"/>
    <property type="match status" value="1"/>
</dbReference>
<protein>
    <recommendedName>
        <fullName evidence="3">Wasp kinin PMM1</fullName>
    </recommendedName>
    <alternativeName>
        <fullName evidence="4">Bradykinin-related peptide</fullName>
    </alternativeName>
</protein>
<accession>P85873</accession>
<sequence length="11" mass="1359">KRRPPGFTPFR</sequence>